<accession>Q9U2C9</accession>
<keyword id="KW-0238">DNA-binding</keyword>
<keyword id="KW-0539">Nucleus</keyword>
<keyword id="KW-1185">Reference proteome</keyword>
<keyword id="KW-0804">Transcription</keyword>
<keyword id="KW-0805">Transcription regulation</keyword>
<reference key="1">
    <citation type="journal article" date="1998" name="Science">
        <title>Genome sequence of the nematode C. elegans: a platform for investigating biology.</title>
        <authorList>
            <consortium name="The C. elegans sequencing consortium"/>
        </authorList>
    </citation>
    <scope>NUCLEOTIDE SEQUENCE [LARGE SCALE GENOMIC DNA]</scope>
    <source>
        <strain>Bristol N2</strain>
    </source>
</reference>
<reference key="2">
    <citation type="journal article" date="2004" name="Development">
        <title>The T-box transcription factors TBX-37 and TBX-38 link GLP-1/Notch signaling to mesoderm induction in C. elegans embryos.</title>
        <authorList>
            <person name="Good K."/>
            <person name="Ciosk R."/>
            <person name="Nance J."/>
            <person name="Neves A."/>
            <person name="Hill R.J."/>
            <person name="Priess J.R."/>
        </authorList>
    </citation>
    <scope>FUNCTION</scope>
    <scope>DEVELOPMENTAL STAGE</scope>
    <scope>MUTAGENESIS OF GLY-192 AND 273-GLN--LEU-313</scope>
</reference>
<evidence type="ECO:0000250" key="1">
    <source>
        <dbReference type="UniProtKB" id="Q9UL17"/>
    </source>
</evidence>
<evidence type="ECO:0000255" key="2">
    <source>
        <dbReference type="PROSITE-ProRule" id="PRU00201"/>
    </source>
</evidence>
<evidence type="ECO:0000256" key="3">
    <source>
        <dbReference type="SAM" id="MobiDB-lite"/>
    </source>
</evidence>
<evidence type="ECO:0000269" key="4">
    <source>
    </source>
</evidence>
<evidence type="ECO:0000305" key="5"/>
<name>TBX37_CAEEL</name>
<proteinExistence type="evidence at protein level"/>
<gene>
    <name type="primary">tbx-37</name>
    <name type="ORF">Y47D3A.12</name>
</gene>
<feature type="chain" id="PRO_0000184482" description="T-box protein 37">
    <location>
        <begin position="1"/>
        <end position="313"/>
    </location>
</feature>
<feature type="DNA-binding region" description="T-box" evidence="2">
    <location>
        <begin position="19"/>
        <end position="195"/>
    </location>
</feature>
<feature type="region of interest" description="Disordered" evidence="3">
    <location>
        <begin position="193"/>
        <end position="228"/>
    </location>
</feature>
<feature type="mutagenesis site" description="In zu464; defective anterior pharynx. Defects in seam cell organization." evidence="4">
    <original>G</original>
    <variation>E</variation>
    <location>
        <position position="192"/>
    </location>
</feature>
<feature type="mutagenesis site" description="In zu466; defective anterior pharynx. Defects in seam cell organization." evidence="4">
    <location>
        <begin position="273"/>
        <end position="313"/>
    </location>
</feature>
<sequence>MYSCTSPSGIEVSLNKPEIWEKFYPKTEMIVTRKRGRVIFPHLDYNVKGLDPDSLYSIYIHLERVDGIKYKFDAGEWKEAGKGDPILPIQYKEHPRGKRTGTEWMSEPVSFAHLKITNDPENKDQKLILAQSLHKYIPVLHIKQLDPYKGTFQMDFHGVEFRLEATQFIVVTAYQNEELTKLKVHHNKFASGFRSNGKRRLSSESENSENSPPKRSASAISSLTPPAISPPMDYTQQNPYFFNQNFFSTPQSHQPQFAAHSANAQNYNNFGAQNGAQFDWNVYYQRQWYWQQQMMMSGGIGQPQMLNNGFPNL</sequence>
<comment type="function">
    <text evidence="1 4">Transcription factor (By similarity). Required for mesodermal induction, acting redundantly with transcription factor tbx-38 (PubMed:15056620). Together with tbx-38, acts by inducing cell fates in the AB lineage, thereby playing a role in development of the anterior pharynx (PubMed:15056620).</text>
</comment>
<comment type="subcellular location">
    <subcellularLocation>
        <location evidence="2">Nucleus</location>
    </subcellularLocation>
</comment>
<comment type="developmental stage">
    <text evidence="4">Expressed in cells of the ABa lineage at the 24-cell stage of embryogenesis.</text>
</comment>
<organism>
    <name type="scientific">Caenorhabditis elegans</name>
    <dbReference type="NCBI Taxonomy" id="6239"/>
    <lineage>
        <taxon>Eukaryota</taxon>
        <taxon>Metazoa</taxon>
        <taxon>Ecdysozoa</taxon>
        <taxon>Nematoda</taxon>
        <taxon>Chromadorea</taxon>
        <taxon>Rhabditida</taxon>
        <taxon>Rhabditina</taxon>
        <taxon>Rhabditomorpha</taxon>
        <taxon>Rhabditoidea</taxon>
        <taxon>Rhabditidae</taxon>
        <taxon>Peloderinae</taxon>
        <taxon>Caenorhabditis</taxon>
    </lineage>
</organism>
<protein>
    <recommendedName>
        <fullName evidence="5">T-box protein 37</fullName>
    </recommendedName>
</protein>
<dbReference type="EMBL" id="AL117202">
    <property type="protein sequence ID" value="CAB57892.2"/>
    <property type="molecule type" value="Genomic_DNA"/>
</dbReference>
<dbReference type="PIR" id="T31544">
    <property type="entry name" value="T31544"/>
</dbReference>
<dbReference type="RefSeq" id="NP_499444.2">
    <property type="nucleotide sequence ID" value="NM_067043.6"/>
</dbReference>
<dbReference type="SMR" id="Q9U2C9"/>
<dbReference type="BioGRID" id="54587">
    <property type="interactions" value="4"/>
</dbReference>
<dbReference type="FunCoup" id="Q9U2C9">
    <property type="interactions" value="222"/>
</dbReference>
<dbReference type="IntAct" id="Q9U2C9">
    <property type="interactions" value="4"/>
</dbReference>
<dbReference type="STRING" id="6239.Y47D3A.12.1"/>
<dbReference type="PaxDb" id="6239-Y47D3A.12"/>
<dbReference type="EnsemblMetazoa" id="Y47D3A.12.1">
    <property type="protein sequence ID" value="Y47D3A.12.1"/>
    <property type="gene ID" value="WBGene00006556"/>
</dbReference>
<dbReference type="GeneID" id="189977"/>
<dbReference type="KEGG" id="cel:CELE_Y47D3A.12"/>
<dbReference type="UCSC" id="Y47D3A.12">
    <property type="organism name" value="c. elegans"/>
</dbReference>
<dbReference type="AGR" id="WB:WBGene00006556"/>
<dbReference type="CTD" id="189977"/>
<dbReference type="WormBase" id="Y47D3A.12">
    <property type="protein sequence ID" value="CE44340"/>
    <property type="gene ID" value="WBGene00006556"/>
    <property type="gene designation" value="tbx-37"/>
</dbReference>
<dbReference type="eggNOG" id="KOG3585">
    <property type="taxonomic scope" value="Eukaryota"/>
</dbReference>
<dbReference type="GeneTree" id="ENSGT00970000196046"/>
<dbReference type="HOGENOM" id="CLU_032588_0_0_1"/>
<dbReference type="InParanoid" id="Q9U2C9"/>
<dbReference type="OMA" id="YTVHIHL"/>
<dbReference type="OrthoDB" id="7442607at2759"/>
<dbReference type="PhylomeDB" id="Q9U2C9"/>
<dbReference type="PRO" id="PR:Q9U2C9"/>
<dbReference type="Proteomes" id="UP000001940">
    <property type="component" value="Chromosome III"/>
</dbReference>
<dbReference type="Bgee" id="WBGene00006556">
    <property type="expression patterns" value="Expressed in embryo and 1 other cell type or tissue"/>
</dbReference>
<dbReference type="GO" id="GO:0000785">
    <property type="term" value="C:chromatin"/>
    <property type="evidence" value="ECO:0000318"/>
    <property type="project" value="GO_Central"/>
</dbReference>
<dbReference type="GO" id="GO:0005634">
    <property type="term" value="C:nucleus"/>
    <property type="evidence" value="ECO:0000314"/>
    <property type="project" value="WormBase"/>
</dbReference>
<dbReference type="GO" id="GO:0000981">
    <property type="term" value="F:DNA-binding transcription factor activity, RNA polymerase II-specific"/>
    <property type="evidence" value="ECO:0000318"/>
    <property type="project" value="GO_Central"/>
</dbReference>
<dbReference type="GO" id="GO:0000978">
    <property type="term" value="F:RNA polymerase II cis-regulatory region sequence-specific DNA binding"/>
    <property type="evidence" value="ECO:0000318"/>
    <property type="project" value="GO_Central"/>
</dbReference>
<dbReference type="GO" id="GO:0001708">
    <property type="term" value="P:cell fate specification"/>
    <property type="evidence" value="ECO:0000318"/>
    <property type="project" value="GO_Central"/>
</dbReference>
<dbReference type="GO" id="GO:0160094">
    <property type="term" value="P:nematode pharynx development"/>
    <property type="evidence" value="ECO:0000316"/>
    <property type="project" value="WormBase"/>
</dbReference>
<dbReference type="GO" id="GO:0045893">
    <property type="term" value="P:positive regulation of DNA-templated transcription"/>
    <property type="evidence" value="ECO:0007669"/>
    <property type="project" value="InterPro"/>
</dbReference>
<dbReference type="GO" id="GO:0006357">
    <property type="term" value="P:regulation of transcription by RNA polymerase II"/>
    <property type="evidence" value="ECO:0000318"/>
    <property type="project" value="GO_Central"/>
</dbReference>
<dbReference type="CDD" id="cd00182">
    <property type="entry name" value="T-box"/>
    <property type="match status" value="1"/>
</dbReference>
<dbReference type="FunFam" id="2.60.40.820:FF:000013">
    <property type="entry name" value="T-box transcription factor tbx-9"/>
    <property type="match status" value="1"/>
</dbReference>
<dbReference type="Gene3D" id="2.60.40.820">
    <property type="entry name" value="Transcription factor, T-box"/>
    <property type="match status" value="1"/>
</dbReference>
<dbReference type="InterPro" id="IPR008967">
    <property type="entry name" value="p53-like_TF_DNA-bd_sf"/>
</dbReference>
<dbReference type="InterPro" id="IPR046360">
    <property type="entry name" value="T-box_DNA-bd"/>
</dbReference>
<dbReference type="InterPro" id="IPR036960">
    <property type="entry name" value="T-box_sf"/>
</dbReference>
<dbReference type="InterPro" id="IPR001699">
    <property type="entry name" value="TF_T-box"/>
</dbReference>
<dbReference type="InterPro" id="IPR018186">
    <property type="entry name" value="TF_T-box_CS"/>
</dbReference>
<dbReference type="PANTHER" id="PTHR11267:SF189">
    <property type="entry name" value="T-BOX PROTEIN 31-RELATED"/>
    <property type="match status" value="1"/>
</dbReference>
<dbReference type="PANTHER" id="PTHR11267">
    <property type="entry name" value="T-BOX PROTEIN-RELATED"/>
    <property type="match status" value="1"/>
</dbReference>
<dbReference type="Pfam" id="PF00907">
    <property type="entry name" value="T-box"/>
    <property type="match status" value="1"/>
</dbReference>
<dbReference type="PRINTS" id="PR00937">
    <property type="entry name" value="TBOX"/>
</dbReference>
<dbReference type="SMART" id="SM00425">
    <property type="entry name" value="TBOX"/>
    <property type="match status" value="1"/>
</dbReference>
<dbReference type="SUPFAM" id="SSF49417">
    <property type="entry name" value="p53-like transcription factors"/>
    <property type="match status" value="1"/>
</dbReference>
<dbReference type="PROSITE" id="PS01283">
    <property type="entry name" value="TBOX_1"/>
    <property type="match status" value="1"/>
</dbReference>
<dbReference type="PROSITE" id="PS01264">
    <property type="entry name" value="TBOX_2"/>
    <property type="match status" value="1"/>
</dbReference>
<dbReference type="PROSITE" id="PS50252">
    <property type="entry name" value="TBOX_3"/>
    <property type="match status" value="1"/>
</dbReference>